<name>SPX_LISMO</name>
<evidence type="ECO:0000255" key="1">
    <source>
        <dbReference type="HAMAP-Rule" id="MF_01132"/>
    </source>
</evidence>
<evidence type="ECO:0000305" key="2"/>
<dbReference type="EMBL" id="AF103794">
    <property type="protein sequence ID" value="AAF21893.1"/>
    <property type="molecule type" value="Genomic_DNA"/>
</dbReference>
<dbReference type="EMBL" id="AL591982">
    <property type="protein sequence ID" value="CAD00269.1"/>
    <property type="molecule type" value="Genomic_DNA"/>
</dbReference>
<dbReference type="PIR" id="AG1348">
    <property type="entry name" value="AG1348"/>
</dbReference>
<dbReference type="SMR" id="Q9RGX0"/>
<dbReference type="STRING" id="169963.gene:17594882"/>
<dbReference type="PaxDb" id="169963-lmo2191"/>
<dbReference type="EnsemblBacteria" id="CAD00269">
    <property type="protein sequence ID" value="CAD00269"/>
    <property type="gene ID" value="CAD00269"/>
</dbReference>
<dbReference type="KEGG" id="lmo:lmo2191"/>
<dbReference type="PATRIC" id="fig|169963.11.peg.2243"/>
<dbReference type="eggNOG" id="COG1393">
    <property type="taxonomic scope" value="Bacteria"/>
</dbReference>
<dbReference type="HOGENOM" id="CLU_116644_1_1_9"/>
<dbReference type="OrthoDB" id="9794155at2"/>
<dbReference type="PhylomeDB" id="Q9RGX0"/>
<dbReference type="BioCyc" id="LMON169963:LMO2191-MONOMER"/>
<dbReference type="PHI-base" id="PHI:6967"/>
<dbReference type="Proteomes" id="UP000000817">
    <property type="component" value="Chromosome"/>
</dbReference>
<dbReference type="GO" id="GO:0005737">
    <property type="term" value="C:cytoplasm"/>
    <property type="evidence" value="ECO:0007669"/>
    <property type="project" value="UniProtKB-SubCell"/>
</dbReference>
<dbReference type="GO" id="GO:0045892">
    <property type="term" value="P:negative regulation of DNA-templated transcription"/>
    <property type="evidence" value="ECO:0007669"/>
    <property type="project" value="InterPro"/>
</dbReference>
<dbReference type="CDD" id="cd03032">
    <property type="entry name" value="ArsC_Spx"/>
    <property type="match status" value="1"/>
</dbReference>
<dbReference type="Gene3D" id="3.40.30.10">
    <property type="entry name" value="Glutaredoxin"/>
    <property type="match status" value="1"/>
</dbReference>
<dbReference type="HAMAP" id="MF_01132">
    <property type="entry name" value="Spx"/>
    <property type="match status" value="1"/>
</dbReference>
<dbReference type="InterPro" id="IPR006660">
    <property type="entry name" value="Arsenate_reductase-like"/>
</dbReference>
<dbReference type="InterPro" id="IPR023731">
    <property type="entry name" value="Spx"/>
</dbReference>
<dbReference type="InterPro" id="IPR036249">
    <property type="entry name" value="Thioredoxin-like_sf"/>
</dbReference>
<dbReference type="InterPro" id="IPR006504">
    <property type="entry name" value="Tscrpt_reg_Spx/MgsR"/>
</dbReference>
<dbReference type="NCBIfam" id="TIGR01617">
    <property type="entry name" value="arsC_related"/>
    <property type="match status" value="1"/>
</dbReference>
<dbReference type="NCBIfam" id="NF002459">
    <property type="entry name" value="PRK01655.1"/>
    <property type="match status" value="1"/>
</dbReference>
<dbReference type="NCBIfam" id="NF009210">
    <property type="entry name" value="PRK12559.1"/>
    <property type="match status" value="1"/>
</dbReference>
<dbReference type="PANTHER" id="PTHR30041">
    <property type="entry name" value="ARSENATE REDUCTASE"/>
    <property type="match status" value="1"/>
</dbReference>
<dbReference type="PANTHER" id="PTHR30041:SF7">
    <property type="entry name" value="GLOBAL TRANSCRIPTIONAL REGULATOR SPX"/>
    <property type="match status" value="1"/>
</dbReference>
<dbReference type="Pfam" id="PF03960">
    <property type="entry name" value="ArsC"/>
    <property type="match status" value="1"/>
</dbReference>
<dbReference type="SUPFAM" id="SSF52833">
    <property type="entry name" value="Thioredoxin-like"/>
    <property type="match status" value="1"/>
</dbReference>
<dbReference type="PROSITE" id="PS51353">
    <property type="entry name" value="ARSC"/>
    <property type="match status" value="1"/>
</dbReference>
<gene>
    <name evidence="1" type="primary">spx</name>
    <name type="ordered locus">lmo2191</name>
</gene>
<feature type="chain" id="PRO_0000162559" description="Global transcriptional regulator Spx">
    <location>
        <begin position="1"/>
        <end position="131"/>
    </location>
</feature>
<feature type="disulfide bond" description="Redox-active" evidence="1">
    <location>
        <begin position="10"/>
        <end position="13"/>
    </location>
</feature>
<feature type="sequence conflict" description="In Ref. 1; AAF21893." evidence="2" ref="1">
    <original>A</original>
    <variation>S</variation>
    <location>
        <position position="16"/>
    </location>
</feature>
<sequence>MVTLYTSPSCTSCRKARAWLEEHDIPYKERNIFSEPLSLDEIKEILRMTEDGTDEIISTRSKTFQKLNVDLDSLPLQQLFELIQKNPGLLRRPIIIDEKRLQVGYNEDEIRRFLPRRVRTYQLREAQKMVN</sequence>
<proteinExistence type="inferred from homology"/>
<reference key="1">
    <citation type="journal article" date="2000" name="J. Bacteriol.">
        <title>Identification in Listeria monocytogenes of MecA, a homologue of the Bacillus subtilis competence regulatory protein.</title>
        <authorList>
            <person name="Borezee E."/>
            <person name="Msadek T."/>
            <person name="Durant L."/>
            <person name="Berche P."/>
        </authorList>
    </citation>
    <scope>NUCLEOTIDE SEQUENCE [GENOMIC DNA]</scope>
    <source>
        <strain>LO28 / Serovar 1/2c</strain>
    </source>
</reference>
<reference key="2">
    <citation type="journal article" date="2001" name="Science">
        <title>Comparative genomics of Listeria species.</title>
        <authorList>
            <person name="Glaser P."/>
            <person name="Frangeul L."/>
            <person name="Buchrieser C."/>
            <person name="Rusniok C."/>
            <person name="Amend A."/>
            <person name="Baquero F."/>
            <person name="Berche P."/>
            <person name="Bloecker H."/>
            <person name="Brandt P."/>
            <person name="Chakraborty T."/>
            <person name="Charbit A."/>
            <person name="Chetouani F."/>
            <person name="Couve E."/>
            <person name="de Daruvar A."/>
            <person name="Dehoux P."/>
            <person name="Domann E."/>
            <person name="Dominguez-Bernal G."/>
            <person name="Duchaud E."/>
            <person name="Durant L."/>
            <person name="Dussurget O."/>
            <person name="Entian K.-D."/>
            <person name="Fsihi H."/>
            <person name="Garcia-del Portillo F."/>
            <person name="Garrido P."/>
            <person name="Gautier L."/>
            <person name="Goebel W."/>
            <person name="Gomez-Lopez N."/>
            <person name="Hain T."/>
            <person name="Hauf J."/>
            <person name="Jackson D."/>
            <person name="Jones L.-M."/>
            <person name="Kaerst U."/>
            <person name="Kreft J."/>
            <person name="Kuhn M."/>
            <person name="Kunst F."/>
            <person name="Kurapkat G."/>
            <person name="Madueno E."/>
            <person name="Maitournam A."/>
            <person name="Mata Vicente J."/>
            <person name="Ng E."/>
            <person name="Nedjari H."/>
            <person name="Nordsiek G."/>
            <person name="Novella S."/>
            <person name="de Pablos B."/>
            <person name="Perez-Diaz J.-C."/>
            <person name="Purcell R."/>
            <person name="Remmel B."/>
            <person name="Rose M."/>
            <person name="Schlueter T."/>
            <person name="Simoes N."/>
            <person name="Tierrez A."/>
            <person name="Vazquez-Boland J.-A."/>
            <person name="Voss H."/>
            <person name="Wehland J."/>
            <person name="Cossart P."/>
        </authorList>
    </citation>
    <scope>NUCLEOTIDE SEQUENCE [LARGE SCALE GENOMIC DNA]</scope>
    <source>
        <strain>ATCC BAA-679 / EGD-e</strain>
    </source>
</reference>
<comment type="function">
    <text evidence="1">Global transcriptional regulator that plays a key role in stress response and exerts either positive or negative regulation of genes. Acts by interacting with the C-terminal domain of the alpha subunit of the RNA polymerase (RNAP). This interaction can enhance binding of RNAP to the promoter region of target genes and stimulate their transcription, or block interaction of RNAP with activator.</text>
</comment>
<comment type="subunit">
    <text evidence="1">Interacts with the C-terminal domain of the alpha subunit of the RNAP.</text>
</comment>
<comment type="subcellular location">
    <subcellularLocation>
        <location evidence="1">Cytoplasm</location>
    </subcellularLocation>
</comment>
<comment type="similarity">
    <text evidence="1">Belongs to the ArsC family. Spx subfamily.</text>
</comment>
<keyword id="KW-0963">Cytoplasm</keyword>
<keyword id="KW-1015">Disulfide bond</keyword>
<keyword id="KW-0676">Redox-active center</keyword>
<keyword id="KW-1185">Reference proteome</keyword>
<keyword id="KW-0804">Transcription</keyword>
<keyword id="KW-0805">Transcription regulation</keyword>
<accession>Q9RGX0</accession>
<accession>Q929I0</accession>
<organism>
    <name type="scientific">Listeria monocytogenes serovar 1/2a (strain ATCC BAA-679 / EGD-e)</name>
    <dbReference type="NCBI Taxonomy" id="169963"/>
    <lineage>
        <taxon>Bacteria</taxon>
        <taxon>Bacillati</taxon>
        <taxon>Bacillota</taxon>
        <taxon>Bacilli</taxon>
        <taxon>Bacillales</taxon>
        <taxon>Listeriaceae</taxon>
        <taxon>Listeria</taxon>
    </lineage>
</organism>
<protein>
    <recommendedName>
        <fullName evidence="1">Global transcriptional regulator Spx</fullName>
    </recommendedName>
</protein>